<dbReference type="EMBL" id="AE016822">
    <property type="protein sequence ID" value="AAT89731.1"/>
    <property type="molecule type" value="Genomic_DNA"/>
</dbReference>
<dbReference type="RefSeq" id="WP_011186717.1">
    <property type="nucleotide sequence ID" value="NC_006087.1"/>
</dbReference>
<dbReference type="SMR" id="Q6AD13"/>
<dbReference type="STRING" id="281090.Lxx20150"/>
<dbReference type="KEGG" id="lxx:Lxx20150"/>
<dbReference type="eggNOG" id="COG0200">
    <property type="taxonomic scope" value="Bacteria"/>
</dbReference>
<dbReference type="HOGENOM" id="CLU_055188_3_0_11"/>
<dbReference type="Proteomes" id="UP000001306">
    <property type="component" value="Chromosome"/>
</dbReference>
<dbReference type="GO" id="GO:0022625">
    <property type="term" value="C:cytosolic large ribosomal subunit"/>
    <property type="evidence" value="ECO:0007669"/>
    <property type="project" value="TreeGrafter"/>
</dbReference>
<dbReference type="GO" id="GO:0019843">
    <property type="term" value="F:rRNA binding"/>
    <property type="evidence" value="ECO:0007669"/>
    <property type="project" value="UniProtKB-UniRule"/>
</dbReference>
<dbReference type="GO" id="GO:0003735">
    <property type="term" value="F:structural constituent of ribosome"/>
    <property type="evidence" value="ECO:0007669"/>
    <property type="project" value="InterPro"/>
</dbReference>
<dbReference type="GO" id="GO:0006412">
    <property type="term" value="P:translation"/>
    <property type="evidence" value="ECO:0007669"/>
    <property type="project" value="UniProtKB-UniRule"/>
</dbReference>
<dbReference type="FunFam" id="3.100.10.10:FF:000005">
    <property type="entry name" value="50S ribosomal protein L15"/>
    <property type="match status" value="1"/>
</dbReference>
<dbReference type="Gene3D" id="3.100.10.10">
    <property type="match status" value="1"/>
</dbReference>
<dbReference type="HAMAP" id="MF_01341">
    <property type="entry name" value="Ribosomal_uL15"/>
    <property type="match status" value="1"/>
</dbReference>
<dbReference type="InterPro" id="IPR030878">
    <property type="entry name" value="Ribosomal_uL15"/>
</dbReference>
<dbReference type="InterPro" id="IPR021131">
    <property type="entry name" value="Ribosomal_uL15/eL18"/>
</dbReference>
<dbReference type="InterPro" id="IPR036227">
    <property type="entry name" value="Ribosomal_uL15/eL18_sf"/>
</dbReference>
<dbReference type="InterPro" id="IPR005749">
    <property type="entry name" value="Ribosomal_uL15_bac-type"/>
</dbReference>
<dbReference type="InterPro" id="IPR001196">
    <property type="entry name" value="Ribosomal_uL15_CS"/>
</dbReference>
<dbReference type="NCBIfam" id="TIGR01071">
    <property type="entry name" value="rplO_bact"/>
    <property type="match status" value="1"/>
</dbReference>
<dbReference type="PANTHER" id="PTHR12934">
    <property type="entry name" value="50S RIBOSOMAL PROTEIN L15"/>
    <property type="match status" value="1"/>
</dbReference>
<dbReference type="PANTHER" id="PTHR12934:SF11">
    <property type="entry name" value="LARGE RIBOSOMAL SUBUNIT PROTEIN UL15M"/>
    <property type="match status" value="1"/>
</dbReference>
<dbReference type="Pfam" id="PF00828">
    <property type="entry name" value="Ribosomal_L27A"/>
    <property type="match status" value="1"/>
</dbReference>
<dbReference type="SUPFAM" id="SSF52080">
    <property type="entry name" value="Ribosomal proteins L15p and L18e"/>
    <property type="match status" value="1"/>
</dbReference>
<dbReference type="PROSITE" id="PS00475">
    <property type="entry name" value="RIBOSOMAL_L15"/>
    <property type="match status" value="1"/>
</dbReference>
<evidence type="ECO:0000255" key="1">
    <source>
        <dbReference type="HAMAP-Rule" id="MF_01341"/>
    </source>
</evidence>
<evidence type="ECO:0000256" key="2">
    <source>
        <dbReference type="SAM" id="MobiDB-lite"/>
    </source>
</evidence>
<evidence type="ECO:0000305" key="3"/>
<organism>
    <name type="scientific">Leifsonia xyli subsp. xyli (strain CTCB07)</name>
    <dbReference type="NCBI Taxonomy" id="281090"/>
    <lineage>
        <taxon>Bacteria</taxon>
        <taxon>Bacillati</taxon>
        <taxon>Actinomycetota</taxon>
        <taxon>Actinomycetes</taxon>
        <taxon>Micrococcales</taxon>
        <taxon>Microbacteriaceae</taxon>
        <taxon>Leifsonia</taxon>
    </lineage>
</organism>
<name>RL15_LEIXX</name>
<sequence length="210" mass="21720">MADDKSTNEAAAKPVAEKATATALAKKAPAKAAAADKAAPAAKGETVAAKPAKASAKKDVAAPREQVLKVHHLRPAAGAKKEKTRVGRGEGSKGKTAGRGTKGTKARYQVRPGFQGGQLPFHMRTPKLRGFKNPFRVEYQVVNLEKLAELYPAGGDVTVAALVAKGAVRKNEKVKVLGNGDIAVKLNVAVDKVSGSAEQKIVAAGGSVNR</sequence>
<reference key="1">
    <citation type="journal article" date="2004" name="Mol. Plant Microbe Interact.">
        <title>The genome sequence of the Gram-positive sugarcane pathogen Leifsonia xyli subsp. xyli.</title>
        <authorList>
            <person name="Monteiro-Vitorello C.B."/>
            <person name="Camargo L.E.A."/>
            <person name="Van Sluys M.A."/>
            <person name="Kitajima J.P."/>
            <person name="Truffi D."/>
            <person name="do Amaral A.M."/>
            <person name="Harakava R."/>
            <person name="de Oliveira J.C.F."/>
            <person name="Wood D."/>
            <person name="de Oliveira M.C."/>
            <person name="Miyaki C.Y."/>
            <person name="Takita M.A."/>
            <person name="da Silva A.C.R."/>
            <person name="Furlan L.R."/>
            <person name="Carraro D.M."/>
            <person name="Camarotte G."/>
            <person name="Almeida N.F. Jr."/>
            <person name="Carrer H."/>
            <person name="Coutinho L.L."/>
            <person name="El-Dorry H.A."/>
            <person name="Ferro M.I.T."/>
            <person name="Gagliardi P.R."/>
            <person name="Giglioti E."/>
            <person name="Goldman M.H.S."/>
            <person name="Goldman G.H."/>
            <person name="Kimura E.T."/>
            <person name="Ferro E.S."/>
            <person name="Kuramae E.E."/>
            <person name="Lemos E.G.M."/>
            <person name="Lemos M.V.F."/>
            <person name="Mauro S.M.Z."/>
            <person name="Machado M.A."/>
            <person name="Marino C.L."/>
            <person name="Menck C.F."/>
            <person name="Nunes L.R."/>
            <person name="Oliveira R.C."/>
            <person name="Pereira G.G."/>
            <person name="Siqueira W."/>
            <person name="de Souza A.A."/>
            <person name="Tsai S.M."/>
            <person name="Zanca A.S."/>
            <person name="Simpson A.J.G."/>
            <person name="Brumbley S.M."/>
            <person name="Setubal J.C."/>
        </authorList>
    </citation>
    <scope>NUCLEOTIDE SEQUENCE [LARGE SCALE GENOMIC DNA]</scope>
    <source>
        <strain>CTCB07</strain>
    </source>
</reference>
<protein>
    <recommendedName>
        <fullName evidence="1">Large ribosomal subunit protein uL15</fullName>
    </recommendedName>
    <alternativeName>
        <fullName evidence="3">50S ribosomal protein L15</fullName>
    </alternativeName>
</protein>
<proteinExistence type="inferred from homology"/>
<keyword id="KW-1185">Reference proteome</keyword>
<keyword id="KW-0687">Ribonucleoprotein</keyword>
<keyword id="KW-0689">Ribosomal protein</keyword>
<keyword id="KW-0694">RNA-binding</keyword>
<keyword id="KW-0699">rRNA-binding</keyword>
<accession>Q6AD13</accession>
<feature type="chain" id="PRO_0000251525" description="Large ribosomal subunit protein uL15">
    <location>
        <begin position="1"/>
        <end position="210"/>
    </location>
</feature>
<feature type="region of interest" description="Disordered" evidence="2">
    <location>
        <begin position="1"/>
        <end position="64"/>
    </location>
</feature>
<feature type="region of interest" description="Disordered" evidence="2">
    <location>
        <begin position="76"/>
        <end position="104"/>
    </location>
</feature>
<feature type="compositionally biased region" description="Low complexity" evidence="2">
    <location>
        <begin position="9"/>
        <end position="54"/>
    </location>
</feature>
<feature type="compositionally biased region" description="Basic and acidic residues" evidence="2">
    <location>
        <begin position="79"/>
        <end position="93"/>
    </location>
</feature>
<gene>
    <name evidence="1" type="primary">rplO</name>
    <name type="ordered locus">Lxx20150</name>
</gene>
<comment type="function">
    <text evidence="1">Binds to the 23S rRNA.</text>
</comment>
<comment type="subunit">
    <text evidence="1">Part of the 50S ribosomal subunit.</text>
</comment>
<comment type="similarity">
    <text evidence="1">Belongs to the universal ribosomal protein uL15 family.</text>
</comment>